<gene>
    <name type="primary">FSHB</name>
</gene>
<keyword id="KW-1015">Disulfide bond</keyword>
<keyword id="KW-0325">Glycoprotein</keyword>
<keyword id="KW-0372">Hormone</keyword>
<keyword id="KW-1185">Reference proteome</keyword>
<keyword id="KW-0964">Secreted</keyword>
<keyword id="KW-0732">Signal</keyword>
<reference key="1">
    <citation type="submission" date="2003-05" db="EMBL/GenBank/DDBJ databases">
        <authorList>
            <person name="Suzuki O."/>
        </authorList>
    </citation>
    <scope>NUCLEOTIDE SEQUENCE [MRNA]</scope>
    <source>
        <strain>Hartley</strain>
        <tissue>Pituitary</tissue>
    </source>
</reference>
<proteinExistence type="evidence at transcript level"/>
<organism>
    <name type="scientific">Cavia porcellus</name>
    <name type="common">Guinea pig</name>
    <dbReference type="NCBI Taxonomy" id="10141"/>
    <lineage>
        <taxon>Eukaryota</taxon>
        <taxon>Metazoa</taxon>
        <taxon>Chordata</taxon>
        <taxon>Craniata</taxon>
        <taxon>Vertebrata</taxon>
        <taxon>Euteleostomi</taxon>
        <taxon>Mammalia</taxon>
        <taxon>Eutheria</taxon>
        <taxon>Euarchontoglires</taxon>
        <taxon>Glires</taxon>
        <taxon>Rodentia</taxon>
        <taxon>Hystricomorpha</taxon>
        <taxon>Caviidae</taxon>
        <taxon>Cavia</taxon>
    </lineage>
</organism>
<feature type="signal peptide" evidence="1">
    <location>
        <begin position="1"/>
        <end position="18"/>
    </location>
</feature>
<feature type="chain" id="PRO_0000011708" description="Follitropin subunit beta">
    <location>
        <begin position="19"/>
        <end position="129"/>
    </location>
</feature>
<feature type="glycosylation site" description="N-linked (GlcNAc...) asparagine" evidence="2">
    <location>
        <position position="25"/>
    </location>
</feature>
<feature type="glycosylation site" description="N-linked (GlcNAc...) asparagine" evidence="2">
    <location>
        <position position="42"/>
    </location>
</feature>
<feature type="disulfide bond" evidence="2">
    <location>
        <begin position="21"/>
        <end position="69"/>
    </location>
</feature>
<feature type="disulfide bond" evidence="2">
    <location>
        <begin position="35"/>
        <end position="84"/>
    </location>
</feature>
<feature type="disulfide bond" evidence="2">
    <location>
        <begin position="38"/>
        <end position="122"/>
    </location>
</feature>
<feature type="disulfide bond" evidence="2">
    <location>
        <begin position="46"/>
        <end position="100"/>
    </location>
</feature>
<feature type="disulfide bond" evidence="2">
    <location>
        <begin position="50"/>
        <end position="102"/>
    </location>
</feature>
<feature type="disulfide bond" evidence="2">
    <location>
        <begin position="105"/>
        <end position="112"/>
    </location>
</feature>
<dbReference type="EMBL" id="AF257212">
    <property type="protein sequence ID" value="AAF68975.1"/>
    <property type="molecule type" value="mRNA"/>
</dbReference>
<dbReference type="RefSeq" id="NP_001166419.1">
    <property type="nucleotide sequence ID" value="NM_001172948.2"/>
</dbReference>
<dbReference type="SMR" id="Q9JK69"/>
<dbReference type="FunCoup" id="Q9JK69">
    <property type="interactions" value="635"/>
</dbReference>
<dbReference type="STRING" id="10141.ENSCPOP00000006961"/>
<dbReference type="GlyCosmos" id="Q9JK69">
    <property type="glycosylation" value="2 sites, No reported glycans"/>
</dbReference>
<dbReference type="GeneID" id="100135522"/>
<dbReference type="KEGG" id="cpoc:100135522"/>
<dbReference type="CTD" id="2488"/>
<dbReference type="eggNOG" id="ENOG502S39C">
    <property type="taxonomic scope" value="Eukaryota"/>
</dbReference>
<dbReference type="HOGENOM" id="CLU_126319_3_0_1"/>
<dbReference type="InParanoid" id="Q9JK69"/>
<dbReference type="OMA" id="PVATGCH"/>
<dbReference type="OrthoDB" id="8453657at2759"/>
<dbReference type="TreeFam" id="TF332940"/>
<dbReference type="Proteomes" id="UP000005447">
    <property type="component" value="Unassembled WGS sequence"/>
</dbReference>
<dbReference type="GO" id="GO:0005737">
    <property type="term" value="C:cytoplasm"/>
    <property type="evidence" value="ECO:0007669"/>
    <property type="project" value="TreeGrafter"/>
</dbReference>
<dbReference type="GO" id="GO:0005615">
    <property type="term" value="C:extracellular space"/>
    <property type="evidence" value="ECO:0000250"/>
    <property type="project" value="UniProtKB"/>
</dbReference>
<dbReference type="GO" id="GO:0016914">
    <property type="term" value="C:follicle-stimulating hormone complex"/>
    <property type="evidence" value="ECO:0000250"/>
    <property type="project" value="UniProtKB"/>
</dbReference>
<dbReference type="GO" id="GO:0016913">
    <property type="term" value="F:follicle-stimulating hormone activity"/>
    <property type="evidence" value="ECO:0000250"/>
    <property type="project" value="UniProtKB"/>
</dbReference>
<dbReference type="GO" id="GO:0042699">
    <property type="term" value="P:follicle-stimulating hormone signaling pathway"/>
    <property type="evidence" value="ECO:0007669"/>
    <property type="project" value="TreeGrafter"/>
</dbReference>
<dbReference type="GO" id="GO:0007186">
    <property type="term" value="P:G protein-coupled receptor signaling pathway"/>
    <property type="evidence" value="ECO:0000250"/>
    <property type="project" value="UniProtKB"/>
</dbReference>
<dbReference type="GO" id="GO:0010469">
    <property type="term" value="P:regulation of signaling receptor activity"/>
    <property type="evidence" value="ECO:0000250"/>
    <property type="project" value="UniProtKB"/>
</dbReference>
<dbReference type="CDD" id="cd00069">
    <property type="entry name" value="GHB_like"/>
    <property type="match status" value="1"/>
</dbReference>
<dbReference type="FunFam" id="2.10.90.10:FF:000007">
    <property type="entry name" value="Luteinizing hormone beta subunit"/>
    <property type="match status" value="1"/>
</dbReference>
<dbReference type="Gene3D" id="2.10.90.10">
    <property type="entry name" value="Cystine-knot cytokines"/>
    <property type="match status" value="1"/>
</dbReference>
<dbReference type="InterPro" id="IPR029034">
    <property type="entry name" value="Cystine-knot_cytokine"/>
</dbReference>
<dbReference type="InterPro" id="IPR006208">
    <property type="entry name" value="Glyco_hormone_CN"/>
</dbReference>
<dbReference type="InterPro" id="IPR001545">
    <property type="entry name" value="Gonadotropin_bsu"/>
</dbReference>
<dbReference type="InterPro" id="IPR018245">
    <property type="entry name" value="Gonadotropin_bsu_CS"/>
</dbReference>
<dbReference type="PANTHER" id="PTHR11515:SF17">
    <property type="entry name" value="FOLLITROPIN SUBUNIT BETA"/>
    <property type="match status" value="1"/>
</dbReference>
<dbReference type="PANTHER" id="PTHR11515">
    <property type="entry name" value="GLYCOPROTEIN HORMONE BETA CHAIN"/>
    <property type="match status" value="1"/>
</dbReference>
<dbReference type="Pfam" id="PF00007">
    <property type="entry name" value="Cys_knot"/>
    <property type="match status" value="1"/>
</dbReference>
<dbReference type="SMART" id="SM00068">
    <property type="entry name" value="GHB"/>
    <property type="match status" value="1"/>
</dbReference>
<dbReference type="SUPFAM" id="SSF57501">
    <property type="entry name" value="Cystine-knot cytokines"/>
    <property type="match status" value="1"/>
</dbReference>
<dbReference type="PROSITE" id="PS00261">
    <property type="entry name" value="GLYCO_HORMONE_BETA_1"/>
    <property type="match status" value="1"/>
</dbReference>
<dbReference type="PROSITE" id="PS00689">
    <property type="entry name" value="GLYCO_HORMONE_BETA_2"/>
    <property type="match status" value="1"/>
</dbReference>
<sequence>MKSIQFCFFFCCWKAICCNGCELTNITITVEREECRFCISVNTTWCAGYCYTRDLVYRDPARPNIQKTCTFKELVYETVRVPGCAHHADSLYTYPVATECQCGKCDSDSTDCTVRGLGPSYCSFSEIKE</sequence>
<comment type="function">
    <text evidence="2">Together with the alpha chain CGA constitutes follitropin, the follicle-stimulating hormone, and provides its biological specificity to the hormone heterodimer. Binds FSHR, a G protein-coupled receptor, on target cells to activate downstream signaling pathways. Follitropin is involved in follicle development and spermatogenesis in reproductive organs.</text>
</comment>
<comment type="subunit">
    <text evidence="2">Heterodimer. The active follitropin is a heterodimer composed of an alpha chain/CGA shared with other hormones and a unique beta chain/FSHB shown here.</text>
</comment>
<comment type="subcellular location">
    <subcellularLocation>
        <location evidence="2">Secreted</location>
    </subcellularLocation>
    <text evidence="2">Efficient secretion requires dimerization with CGA.</text>
</comment>
<comment type="similarity">
    <text evidence="3">Belongs to the glycoprotein hormones subunit beta family.</text>
</comment>
<name>FSHB_CAVPO</name>
<protein>
    <recommendedName>
        <fullName>Follitropin subunit beta</fullName>
    </recommendedName>
    <alternativeName>
        <fullName>Follicle-stimulating hormone beta subunit</fullName>
        <shortName>FSH-B</shortName>
        <shortName>FSH-beta</shortName>
    </alternativeName>
    <alternativeName>
        <fullName>Follitropin beta chain</fullName>
    </alternativeName>
</protein>
<accession>Q9JK69</accession>
<evidence type="ECO:0000250" key="1"/>
<evidence type="ECO:0000250" key="2">
    <source>
        <dbReference type="UniProtKB" id="P01225"/>
    </source>
</evidence>
<evidence type="ECO:0000305" key="3"/>